<protein>
    <recommendedName>
        <fullName evidence="1">tRNA N6-adenosine threonylcarbamoyltransferase</fullName>
        <ecNumber evidence="1">2.3.1.234</ecNumber>
    </recommendedName>
    <alternativeName>
        <fullName evidence="1">N6-L-threonylcarbamoyladenine synthase</fullName>
        <shortName evidence="1">t(6)A synthase</shortName>
    </alternativeName>
    <alternativeName>
        <fullName evidence="1">t(6)A37 threonylcarbamoyladenosine biosynthesis protein TsaD</fullName>
    </alternativeName>
    <alternativeName>
        <fullName evidence="1">tRNA threonylcarbamoyladenosine biosynthesis protein TsaD</fullName>
    </alternativeName>
</protein>
<sequence length="339" mass="36774">MSAIILGIESSCDDTSAAVIKDGYLLSNVVSSQAVHEAYGGVVPELASRAHQQNIVPVVHEALKRAGVTKEELSAVAFTRGPGLMGSLLVGVSFAKGFARSLGIPLIDVNHLTGHVLAHFIKAEGEENIQPKFPFLCLLVSGGNSQIILVKAYNDMEILGQTIDDAAGEAIDKCSKVMGLGYPGGPIIDKLARQGNPKAYTFSKPHIPGLDYSFSGLKTSFLYSLRDWMKDDPDFIEHHKVDLAASLEATVVDILMDKLRKAAKEYKIKEVAVAGGVSANNGLRNSFREHAEKYGWNIFIPKFSYTTDNAAMIAITGYFKYLDKDFCSIDLPAYSRVTL</sequence>
<organism>
    <name type="scientific">Bacteroides thetaiotaomicron (strain ATCC 29148 / DSM 2079 / JCM 5827 / CCUG 10774 / NCTC 10582 / VPI-5482 / E50)</name>
    <dbReference type="NCBI Taxonomy" id="226186"/>
    <lineage>
        <taxon>Bacteria</taxon>
        <taxon>Pseudomonadati</taxon>
        <taxon>Bacteroidota</taxon>
        <taxon>Bacteroidia</taxon>
        <taxon>Bacteroidales</taxon>
        <taxon>Bacteroidaceae</taxon>
        <taxon>Bacteroides</taxon>
    </lineage>
</organism>
<comment type="function">
    <text evidence="1">Required for the formation of a threonylcarbamoyl group on adenosine at position 37 (t(6)A37) in tRNAs that read codons beginning with adenine. Is involved in the transfer of the threonylcarbamoyl moiety of threonylcarbamoyl-AMP (TC-AMP) to the N6 group of A37, together with TsaE and TsaB. TsaD likely plays a direct catalytic role in this reaction.</text>
</comment>
<comment type="catalytic activity">
    <reaction evidence="1">
        <text>L-threonylcarbamoyladenylate + adenosine(37) in tRNA = N(6)-L-threonylcarbamoyladenosine(37) in tRNA + AMP + H(+)</text>
        <dbReference type="Rhea" id="RHEA:37059"/>
        <dbReference type="Rhea" id="RHEA-COMP:10162"/>
        <dbReference type="Rhea" id="RHEA-COMP:10163"/>
        <dbReference type="ChEBI" id="CHEBI:15378"/>
        <dbReference type="ChEBI" id="CHEBI:73682"/>
        <dbReference type="ChEBI" id="CHEBI:74411"/>
        <dbReference type="ChEBI" id="CHEBI:74418"/>
        <dbReference type="ChEBI" id="CHEBI:456215"/>
        <dbReference type="EC" id="2.3.1.234"/>
    </reaction>
</comment>
<comment type="cofactor">
    <cofactor evidence="1">
        <name>Fe(2+)</name>
        <dbReference type="ChEBI" id="CHEBI:29033"/>
    </cofactor>
    <text evidence="1">Binds 1 Fe(2+) ion per subunit.</text>
</comment>
<comment type="subcellular location">
    <subcellularLocation>
        <location evidence="1">Cytoplasm</location>
    </subcellularLocation>
</comment>
<comment type="similarity">
    <text evidence="1">Belongs to the KAE1 / TsaD family.</text>
</comment>
<dbReference type="EC" id="2.3.1.234" evidence="1"/>
<dbReference type="EMBL" id="AE015928">
    <property type="protein sequence ID" value="AAO76027.1"/>
    <property type="molecule type" value="Genomic_DNA"/>
</dbReference>
<dbReference type="RefSeq" id="NP_809833.1">
    <property type="nucleotide sequence ID" value="NC_004663.1"/>
</dbReference>
<dbReference type="RefSeq" id="WP_011107518.1">
    <property type="nucleotide sequence ID" value="NC_004663.1"/>
</dbReference>
<dbReference type="SMR" id="Q8A997"/>
<dbReference type="FunCoup" id="Q8A997">
    <property type="interactions" value="529"/>
</dbReference>
<dbReference type="STRING" id="226186.BT_0920"/>
<dbReference type="PaxDb" id="226186-BT_0920"/>
<dbReference type="EnsemblBacteria" id="AAO76027">
    <property type="protein sequence ID" value="AAO76027"/>
    <property type="gene ID" value="BT_0920"/>
</dbReference>
<dbReference type="GeneID" id="60926894"/>
<dbReference type="KEGG" id="bth:BT_0920"/>
<dbReference type="PATRIC" id="fig|226186.12.peg.933"/>
<dbReference type="eggNOG" id="COG0533">
    <property type="taxonomic scope" value="Bacteria"/>
</dbReference>
<dbReference type="HOGENOM" id="CLU_023208_0_2_10"/>
<dbReference type="InParanoid" id="Q8A997"/>
<dbReference type="OrthoDB" id="9806197at2"/>
<dbReference type="Proteomes" id="UP000001414">
    <property type="component" value="Chromosome"/>
</dbReference>
<dbReference type="GO" id="GO:0005737">
    <property type="term" value="C:cytoplasm"/>
    <property type="evidence" value="ECO:0007669"/>
    <property type="project" value="UniProtKB-SubCell"/>
</dbReference>
<dbReference type="GO" id="GO:0005506">
    <property type="term" value="F:iron ion binding"/>
    <property type="evidence" value="ECO:0007669"/>
    <property type="project" value="UniProtKB-UniRule"/>
</dbReference>
<dbReference type="GO" id="GO:0061711">
    <property type="term" value="F:N(6)-L-threonylcarbamoyladenine synthase activity"/>
    <property type="evidence" value="ECO:0007669"/>
    <property type="project" value="UniProtKB-EC"/>
</dbReference>
<dbReference type="GO" id="GO:0002949">
    <property type="term" value="P:tRNA threonylcarbamoyladenosine modification"/>
    <property type="evidence" value="ECO:0007669"/>
    <property type="project" value="UniProtKB-UniRule"/>
</dbReference>
<dbReference type="CDD" id="cd24133">
    <property type="entry name" value="ASKHA_NBD_TsaD_bac"/>
    <property type="match status" value="1"/>
</dbReference>
<dbReference type="FunFam" id="3.30.420.40:FF:000012">
    <property type="entry name" value="tRNA N6-adenosine threonylcarbamoyltransferase"/>
    <property type="match status" value="1"/>
</dbReference>
<dbReference type="FunFam" id="3.30.420.40:FF:000040">
    <property type="entry name" value="tRNA N6-adenosine threonylcarbamoyltransferase"/>
    <property type="match status" value="1"/>
</dbReference>
<dbReference type="Gene3D" id="3.30.420.40">
    <property type="match status" value="2"/>
</dbReference>
<dbReference type="HAMAP" id="MF_01445">
    <property type="entry name" value="TsaD"/>
    <property type="match status" value="1"/>
</dbReference>
<dbReference type="InterPro" id="IPR043129">
    <property type="entry name" value="ATPase_NBD"/>
</dbReference>
<dbReference type="InterPro" id="IPR000905">
    <property type="entry name" value="Gcp-like_dom"/>
</dbReference>
<dbReference type="InterPro" id="IPR017861">
    <property type="entry name" value="KAE1/TsaD"/>
</dbReference>
<dbReference type="InterPro" id="IPR017860">
    <property type="entry name" value="Peptidase_M22_CS"/>
</dbReference>
<dbReference type="InterPro" id="IPR022450">
    <property type="entry name" value="TsaD"/>
</dbReference>
<dbReference type="NCBIfam" id="TIGR00329">
    <property type="entry name" value="gcp_kae1"/>
    <property type="match status" value="1"/>
</dbReference>
<dbReference type="NCBIfam" id="TIGR03723">
    <property type="entry name" value="T6A_TsaD_YgjD"/>
    <property type="match status" value="1"/>
</dbReference>
<dbReference type="PANTHER" id="PTHR11735">
    <property type="entry name" value="TRNA N6-ADENOSINE THREONYLCARBAMOYLTRANSFERASE"/>
    <property type="match status" value="1"/>
</dbReference>
<dbReference type="PANTHER" id="PTHR11735:SF6">
    <property type="entry name" value="TRNA N6-ADENOSINE THREONYLCARBAMOYLTRANSFERASE, MITOCHONDRIAL"/>
    <property type="match status" value="1"/>
</dbReference>
<dbReference type="Pfam" id="PF00814">
    <property type="entry name" value="TsaD"/>
    <property type="match status" value="1"/>
</dbReference>
<dbReference type="PRINTS" id="PR00789">
    <property type="entry name" value="OSIALOPTASE"/>
</dbReference>
<dbReference type="SUPFAM" id="SSF53067">
    <property type="entry name" value="Actin-like ATPase domain"/>
    <property type="match status" value="2"/>
</dbReference>
<dbReference type="PROSITE" id="PS01016">
    <property type="entry name" value="GLYCOPROTEASE"/>
    <property type="match status" value="1"/>
</dbReference>
<gene>
    <name evidence="1" type="primary">tsaD</name>
    <name type="synonym">gcp</name>
    <name type="ordered locus">BT_0920</name>
</gene>
<name>TSAD_BACTN</name>
<accession>Q8A997</accession>
<reference key="1">
    <citation type="journal article" date="2003" name="Science">
        <title>A genomic view of the human-Bacteroides thetaiotaomicron symbiosis.</title>
        <authorList>
            <person name="Xu J."/>
            <person name="Bjursell M.K."/>
            <person name="Himrod J."/>
            <person name="Deng S."/>
            <person name="Carmichael L.K."/>
            <person name="Chiang H.C."/>
            <person name="Hooper L.V."/>
            <person name="Gordon J.I."/>
        </authorList>
    </citation>
    <scope>NUCLEOTIDE SEQUENCE [LARGE SCALE GENOMIC DNA]</scope>
    <source>
        <strain>ATCC 29148 / DSM 2079 / JCM 5827 / CCUG 10774 / NCTC 10582 / VPI-5482 / E50</strain>
    </source>
</reference>
<evidence type="ECO:0000255" key="1">
    <source>
        <dbReference type="HAMAP-Rule" id="MF_01445"/>
    </source>
</evidence>
<proteinExistence type="inferred from homology"/>
<keyword id="KW-0012">Acyltransferase</keyword>
<keyword id="KW-0963">Cytoplasm</keyword>
<keyword id="KW-0408">Iron</keyword>
<keyword id="KW-0479">Metal-binding</keyword>
<keyword id="KW-1185">Reference proteome</keyword>
<keyword id="KW-0808">Transferase</keyword>
<keyword id="KW-0819">tRNA processing</keyword>
<feature type="chain" id="PRO_0000303273" description="tRNA N6-adenosine threonylcarbamoyltransferase">
    <location>
        <begin position="1"/>
        <end position="339"/>
    </location>
</feature>
<feature type="binding site" evidence="1">
    <location>
        <position position="111"/>
    </location>
    <ligand>
        <name>Fe cation</name>
        <dbReference type="ChEBI" id="CHEBI:24875"/>
    </ligand>
</feature>
<feature type="binding site" evidence="1">
    <location>
        <position position="115"/>
    </location>
    <ligand>
        <name>Fe cation</name>
        <dbReference type="ChEBI" id="CHEBI:24875"/>
    </ligand>
</feature>
<feature type="binding site" evidence="1">
    <location>
        <begin position="139"/>
        <end position="143"/>
    </location>
    <ligand>
        <name>substrate</name>
    </ligand>
</feature>
<feature type="binding site" evidence="1">
    <location>
        <position position="172"/>
    </location>
    <ligand>
        <name>substrate</name>
    </ligand>
</feature>
<feature type="binding site" evidence="1">
    <location>
        <position position="185"/>
    </location>
    <ligand>
        <name>substrate</name>
    </ligand>
</feature>
<feature type="binding site" evidence="1">
    <location>
        <position position="189"/>
    </location>
    <ligand>
        <name>substrate</name>
    </ligand>
</feature>
<feature type="binding site" evidence="1">
    <location>
        <position position="280"/>
    </location>
    <ligand>
        <name>substrate</name>
    </ligand>
</feature>
<feature type="binding site" evidence="1">
    <location>
        <position position="308"/>
    </location>
    <ligand>
        <name>Fe cation</name>
        <dbReference type="ChEBI" id="CHEBI:24875"/>
    </ligand>
</feature>